<proteinExistence type="evidence at transcript level"/>
<reference key="1">
    <citation type="journal article" date="1997" name="Vaccine">
        <title>Immunogenicity and efficacy of baculovirus-expressed and DNA-based equine influenza virus hemagglutinin vaccines in mice.</title>
        <authorList>
            <person name="Olsen C.W."/>
            <person name="McGregor M.W."/>
            <person name="Dybdahl-Sissoko N."/>
            <person name="Schram B.R."/>
            <person name="Nelson K.M."/>
            <person name="Lunn D.P."/>
            <person name="Macklin M.D."/>
            <person name="Swain W.F."/>
            <person name="Hinshaw V.S."/>
        </authorList>
    </citation>
    <scope>NUCLEOTIDE SEQUENCE [MRNA]</scope>
</reference>
<keyword id="KW-1167">Clathrin- and caveolin-independent endocytosis of virus by host</keyword>
<keyword id="KW-1165">Clathrin-mediated endocytosis of virus by host</keyword>
<keyword id="KW-1015">Disulfide bond</keyword>
<keyword id="KW-1170">Fusion of virus membrane with host endosomal membrane</keyword>
<keyword id="KW-1168">Fusion of virus membrane with host membrane</keyword>
<keyword id="KW-0325">Glycoprotein</keyword>
<keyword id="KW-0348">Hemagglutinin</keyword>
<keyword id="KW-1032">Host cell membrane</keyword>
<keyword id="KW-1043">Host membrane</keyword>
<keyword id="KW-0945">Host-virus interaction</keyword>
<keyword id="KW-0449">Lipoprotein</keyword>
<keyword id="KW-0472">Membrane</keyword>
<keyword id="KW-0564">Palmitate</keyword>
<keyword id="KW-0732">Signal</keyword>
<keyword id="KW-0812">Transmembrane</keyword>
<keyword id="KW-1133">Transmembrane helix</keyword>
<keyword id="KW-1161">Viral attachment to host cell</keyword>
<keyword id="KW-0261">Viral envelope protein</keyword>
<keyword id="KW-1162">Viral penetration into host cytoplasm</keyword>
<keyword id="KW-0946">Virion</keyword>
<keyword id="KW-1164">Virus endocytosis by host</keyword>
<keyword id="KW-1160">Virus entry into host cell</keyword>
<sequence>MKTTIILILLTHWVYSQNPTSGNNTATLCLGHHAVANGTLVKTITDDQIEVTNATELVQSTSIGKICNNPYRVLDGRNCTLIDAMLGDPHCDVFQYENWDLFIERSSAFSNCYPYDIPDYASLRSIVASSGTLEFTAEGFTWTGVTQNGGSGACRRGSADSFFSRLNWLTKSGNSYPTLNVTMPNNNNFDKLYIWGIHHPSTNNEQTKLYIQESGRVTVSTKRSQQTIIPNIGSRPWVRGQSGRISIYWTIVKPGDILMINSNGNLVAPRGYFKMRTGKSSVMRSDAPIDTCVSECITPNGSIPNDKPFQNVNKVTYGKCPKYIKQNTLKLATGMRNVPEKQIRGIFGAIAGFIENGWEGMVDGWYGFRYQNSEGTGQAADLKSTQAAIDQINGKLNRVIERTNEKFHQIEKEFSEVEGRIQDLEKYVEDTKIDLWSYNAELLVALENQHTIDLTDAEMNKLFEKTRRQLRENAEDMGGGCFKIYHKCDNACIGSIRNGTYDHYIYRDEALNNRFQIKGVELKSGYKDWILWISFAISCFLICVVLLGFIMWACQKGNIRCNICI</sequence>
<name>HEMA_I81A2</name>
<organism>
    <name type="scientific">Influenza A virus (strain A/Equine/Kentucky/1/1981)</name>
    <dbReference type="NCBI Taxonomy" id="475467"/>
    <lineage>
        <taxon>Viruses</taxon>
        <taxon>Riboviria</taxon>
        <taxon>Orthornavirae</taxon>
        <taxon>Negarnaviricota</taxon>
        <taxon>Polyploviricotina</taxon>
        <taxon>Insthoviricetes</taxon>
        <taxon>Articulavirales</taxon>
        <taxon>Orthomyxoviridae</taxon>
        <taxon>Alphainfluenzavirus</taxon>
        <taxon>Alphainfluenzavirus influenzae</taxon>
        <taxon>Influenza A virus</taxon>
    </lineage>
</organism>
<comment type="function">
    <text evidence="1">Binds to sialic acid-containing receptors on the cell surface, bringing about the attachment of the virus particle to the cell. This attachment induces virion internalization either through clathrin-dependent endocytosis or through clathrin- and caveolin-independent pathway. Plays a major role in the determination of host range restriction and virulence. Class I viral fusion protein. Responsible for penetration of the virus into the cell cytoplasm by mediating the fusion of the membrane of the endocytosed virus particle with the endosomal membrane. Low pH in endosomes induces an irreversible conformational change in HA2, releasing the fusion hydrophobic peptide. Several trimers are required to form a competent fusion pore.</text>
</comment>
<comment type="subunit">
    <text evidence="1">Homotrimer of disulfide-linked HA1-HA2.</text>
</comment>
<comment type="subcellular location">
    <subcellularLocation>
        <location evidence="1">Virion membrane</location>
        <topology evidence="1">Single-pass type I membrane protein</topology>
    </subcellularLocation>
    <subcellularLocation>
        <location evidence="1">Host apical cell membrane</location>
        <topology evidence="1">Single-pass type I membrane protein</topology>
    </subcellularLocation>
    <text evidence="1">Targeted to the apical plasma membrane in epithelial polarized cells through a signal present in the transmembrane domain. Associated with glycosphingolipid- and cholesterol-enriched detergent-resistant lipid rafts.</text>
</comment>
<comment type="PTM">
    <text evidence="1">Palmitoylated.</text>
</comment>
<comment type="PTM">
    <text evidence="1">In natural infection, inactive HA is matured into HA1 and HA2 outside the cell by one or more trypsin-like, arginine-specific endoprotease secreted by the bronchial epithelial cells. One identified protease that may be involved in this process is secreted in lungs by club cells.</text>
</comment>
<comment type="miscellaneous">
    <text>Major glycoprotein, comprises over 80% of the envelope proteins present in virus particle.</text>
</comment>
<comment type="miscellaneous">
    <text>The extent of infection into host organism is determined by HA. Influenza viruses bud from the apical surface of polarized epithelial cells (e.g. bronchial epithelial cells) into lumen of lungs and are therefore usually pneumotropic. The reason is that HA is cleaved by tryptase clara which is restricted to lungs. However, HAs of H5 and H7 pantropic avian viruses subtypes can be cleaved by furin and subtilisin-type enzymes, allowing the virus to grow in other organs than lungs.</text>
</comment>
<comment type="miscellaneous">
    <text evidence="2">The influenza A genome consist of 8 RNA segments. Genetic variation of hemagglutinin and/or neuraminidase genes results in the emergence of new influenza strains. The mechanism of variation can be the result of point mutations or the result of genetic reassortment between segments of two different strains.</text>
</comment>
<comment type="similarity">
    <text evidence="1">Belongs to the influenza viruses hemagglutinin family.</text>
</comment>
<accession>Q82559</accession>
<organismHost>
    <name type="scientific">Aves</name>
    <dbReference type="NCBI Taxonomy" id="8782"/>
</organismHost>
<organismHost>
    <name type="scientific">Equus caballus</name>
    <name type="common">Horse</name>
    <dbReference type="NCBI Taxonomy" id="9796"/>
</organismHost>
<feature type="signal peptide" evidence="1">
    <location>
        <begin position="1"/>
        <end position="16"/>
    </location>
</feature>
<feature type="chain" id="PRO_0000440494" description="Hemagglutinin" evidence="1">
    <location>
        <begin position="17"/>
        <end position="565"/>
    </location>
</feature>
<feature type="chain" id="PRO_0000280191" description="Hemagglutinin HA1 chain">
    <location>
        <begin position="17"/>
        <end position="343"/>
    </location>
</feature>
<feature type="chain" id="PRO_0000280192" description="Hemagglutinin HA2 chain" evidence="1">
    <location>
        <begin position="345"/>
        <end position="565"/>
    </location>
</feature>
<feature type="topological domain" description="Extracellular" evidence="1">
    <location>
        <begin position="17"/>
        <end position="529"/>
    </location>
</feature>
<feature type="transmembrane region" description="Helical" evidence="1">
    <location>
        <begin position="530"/>
        <end position="550"/>
    </location>
</feature>
<feature type="topological domain" description="Cytoplasmic" evidence="1">
    <location>
        <begin position="551"/>
        <end position="565"/>
    </location>
</feature>
<feature type="site" description="Cleavage; by host" evidence="1">
    <location>
        <begin position="344"/>
        <end position="345"/>
    </location>
</feature>
<feature type="lipid moiety-binding region" description="S-palmitoyl cysteine; by host" evidence="1">
    <location>
        <position position="554"/>
    </location>
</feature>
<feature type="lipid moiety-binding region" description="S-palmitoyl cysteine; by host" evidence="1">
    <location>
        <position position="561"/>
    </location>
</feature>
<feature type="lipid moiety-binding region" description="S-palmitoyl cysteine; by host" evidence="1">
    <location>
        <position position="564"/>
    </location>
</feature>
<feature type="glycosylation site" description="N-linked (GlcNAc...) asparagine; by host" evidence="1">
    <location>
        <position position="23"/>
    </location>
</feature>
<feature type="glycosylation site" description="N-linked (GlcNAc...) asparagine; by host" evidence="1">
    <location>
        <position position="37"/>
    </location>
</feature>
<feature type="glycosylation site" description="N-linked (GlcNAc...) asparagine; by host" evidence="1">
    <location>
        <position position="53"/>
    </location>
</feature>
<feature type="glycosylation site" description="N-linked (GlcNAc...) asparagine; by host" evidence="1">
    <location>
        <position position="78"/>
    </location>
</feature>
<feature type="glycosylation site" description="N-linked (GlcNAc...) asparagine; by host" evidence="1">
    <location>
        <position position="180"/>
    </location>
</feature>
<feature type="glycosylation site" description="N-linked (GlcNAc...) asparagine; by host" evidence="1">
    <location>
        <position position="300"/>
    </location>
</feature>
<feature type="glycosylation site" description="N-linked (GlcNAc...) asparagine; by host" evidence="1">
    <location>
        <position position="498"/>
    </location>
</feature>
<feature type="disulfide bond" description="Interchain (between HA1 and HA2 chains)" evidence="1">
    <location>
        <begin position="29"/>
        <end position="481"/>
    </location>
</feature>
<feature type="disulfide bond" evidence="1">
    <location>
        <begin position="67"/>
        <end position="292"/>
    </location>
</feature>
<feature type="disulfide bond" evidence="1">
    <location>
        <begin position="79"/>
        <end position="91"/>
    </location>
</feature>
<feature type="disulfide bond" evidence="1">
    <location>
        <begin position="112"/>
        <end position="154"/>
    </location>
</feature>
<feature type="disulfide bond" evidence="1">
    <location>
        <begin position="296"/>
        <end position="320"/>
    </location>
</feature>
<feature type="disulfide bond" evidence="1">
    <location>
        <begin position="488"/>
        <end position="492"/>
    </location>
</feature>
<dbReference type="EMBL" id="U58195">
    <property type="protein sequence ID" value="AAB02560.1"/>
    <property type="molecule type" value="mRNA"/>
</dbReference>
<dbReference type="SMR" id="Q82559"/>
<dbReference type="GlyCosmos" id="Q82559">
    <property type="glycosylation" value="7 sites, No reported glycans"/>
</dbReference>
<dbReference type="GO" id="GO:0020002">
    <property type="term" value="C:host cell plasma membrane"/>
    <property type="evidence" value="ECO:0007669"/>
    <property type="project" value="UniProtKB-SubCell"/>
</dbReference>
<dbReference type="GO" id="GO:0016020">
    <property type="term" value="C:membrane"/>
    <property type="evidence" value="ECO:0007669"/>
    <property type="project" value="UniProtKB-UniRule"/>
</dbReference>
<dbReference type="GO" id="GO:0019031">
    <property type="term" value="C:viral envelope"/>
    <property type="evidence" value="ECO:0007669"/>
    <property type="project" value="UniProtKB-UniRule"/>
</dbReference>
<dbReference type="GO" id="GO:0055036">
    <property type="term" value="C:virion membrane"/>
    <property type="evidence" value="ECO:0007669"/>
    <property type="project" value="UniProtKB-SubCell"/>
</dbReference>
<dbReference type="GO" id="GO:0046789">
    <property type="term" value="F:host cell surface receptor binding"/>
    <property type="evidence" value="ECO:0007669"/>
    <property type="project" value="UniProtKB-UniRule"/>
</dbReference>
<dbReference type="GO" id="GO:0075512">
    <property type="term" value="P:clathrin-dependent endocytosis of virus by host cell"/>
    <property type="evidence" value="ECO:0007669"/>
    <property type="project" value="UniProtKB-UniRule"/>
</dbReference>
<dbReference type="GO" id="GO:0039654">
    <property type="term" value="P:fusion of virus membrane with host endosome membrane"/>
    <property type="evidence" value="ECO:0007669"/>
    <property type="project" value="UniProtKB-UniRule"/>
</dbReference>
<dbReference type="GO" id="GO:0019064">
    <property type="term" value="P:fusion of virus membrane with host plasma membrane"/>
    <property type="evidence" value="ECO:0007669"/>
    <property type="project" value="InterPro"/>
</dbReference>
<dbReference type="GO" id="GO:0046761">
    <property type="term" value="P:viral budding from plasma membrane"/>
    <property type="evidence" value="ECO:0007669"/>
    <property type="project" value="UniProtKB-UniRule"/>
</dbReference>
<dbReference type="GO" id="GO:0019062">
    <property type="term" value="P:virion attachment to host cell"/>
    <property type="evidence" value="ECO:0007669"/>
    <property type="project" value="UniProtKB-KW"/>
</dbReference>
<dbReference type="FunFam" id="3.90.20.10:FF:000001">
    <property type="entry name" value="Hemagglutinin"/>
    <property type="match status" value="1"/>
</dbReference>
<dbReference type="FunFam" id="3.90.209.20:FF:000001">
    <property type="entry name" value="Hemagglutinin"/>
    <property type="match status" value="1"/>
</dbReference>
<dbReference type="Gene3D" id="3.90.20.10">
    <property type="match status" value="1"/>
</dbReference>
<dbReference type="Gene3D" id="3.90.209.20">
    <property type="match status" value="1"/>
</dbReference>
<dbReference type="HAMAP" id="MF_04072">
    <property type="entry name" value="INFV_HEMA"/>
    <property type="match status" value="1"/>
</dbReference>
<dbReference type="InterPro" id="IPR008980">
    <property type="entry name" value="Capsid_hemagglutn"/>
</dbReference>
<dbReference type="InterPro" id="IPR013828">
    <property type="entry name" value="Hemagglutn_HA1_a/b_dom_sf"/>
</dbReference>
<dbReference type="InterPro" id="IPR000149">
    <property type="entry name" value="Hemagglutn_influenz_A"/>
</dbReference>
<dbReference type="InterPro" id="IPR001364">
    <property type="entry name" value="Hemagglutn_influenz_A/B"/>
</dbReference>
<dbReference type="Pfam" id="PF00509">
    <property type="entry name" value="Hemagglutinin"/>
    <property type="match status" value="1"/>
</dbReference>
<dbReference type="PRINTS" id="PR00330">
    <property type="entry name" value="HEMAGGLUTN1"/>
</dbReference>
<dbReference type="PRINTS" id="PR00329">
    <property type="entry name" value="HEMAGGLUTN12"/>
</dbReference>
<dbReference type="SUPFAM" id="SSF58064">
    <property type="entry name" value="Influenza hemagglutinin (stalk)"/>
    <property type="match status" value="1"/>
</dbReference>
<dbReference type="SUPFAM" id="SSF49818">
    <property type="entry name" value="Viral protein domain"/>
    <property type="match status" value="1"/>
</dbReference>
<gene>
    <name evidence="1" type="primary">HA</name>
</gene>
<evidence type="ECO:0000255" key="1">
    <source>
        <dbReference type="HAMAP-Rule" id="MF_04072"/>
    </source>
</evidence>
<evidence type="ECO:0000305" key="2"/>
<protein>
    <recommendedName>
        <fullName evidence="1">Hemagglutinin</fullName>
    </recommendedName>
    <component>
        <recommendedName>
            <fullName evidence="1">Hemagglutinin HA1 chain</fullName>
        </recommendedName>
    </component>
    <component>
        <recommendedName>
            <fullName evidence="1">Hemagglutinin HA2 chain</fullName>
        </recommendedName>
    </component>
</protein>